<dbReference type="EMBL" id="AF258868">
    <property type="protein sequence ID" value="AAL74304.1"/>
    <property type="molecule type" value="Genomic_DNA"/>
</dbReference>
<dbReference type="GO" id="GO:0005743">
    <property type="term" value="C:mitochondrial inner membrane"/>
    <property type="evidence" value="ECO:0007669"/>
    <property type="project" value="UniProtKB-SubCell"/>
</dbReference>
<dbReference type="GO" id="GO:0045275">
    <property type="term" value="C:respiratory chain complex III"/>
    <property type="evidence" value="ECO:0007669"/>
    <property type="project" value="InterPro"/>
</dbReference>
<dbReference type="GO" id="GO:0046872">
    <property type="term" value="F:metal ion binding"/>
    <property type="evidence" value="ECO:0007669"/>
    <property type="project" value="UniProtKB-KW"/>
</dbReference>
<dbReference type="GO" id="GO:0008121">
    <property type="term" value="F:ubiquinol-cytochrome-c reductase activity"/>
    <property type="evidence" value="ECO:0007669"/>
    <property type="project" value="InterPro"/>
</dbReference>
<dbReference type="GO" id="GO:0006122">
    <property type="term" value="P:mitochondrial electron transport, ubiquinol to cytochrome c"/>
    <property type="evidence" value="ECO:0007669"/>
    <property type="project" value="TreeGrafter"/>
</dbReference>
<dbReference type="CDD" id="cd00290">
    <property type="entry name" value="cytochrome_b_C"/>
    <property type="match status" value="1"/>
</dbReference>
<dbReference type="CDD" id="cd00284">
    <property type="entry name" value="Cytochrome_b_N"/>
    <property type="match status" value="1"/>
</dbReference>
<dbReference type="FunFam" id="1.20.810.10:FF:000002">
    <property type="entry name" value="Cytochrome b"/>
    <property type="match status" value="1"/>
</dbReference>
<dbReference type="Gene3D" id="1.20.810.10">
    <property type="entry name" value="Cytochrome Bc1 Complex, Chain C"/>
    <property type="match status" value="1"/>
</dbReference>
<dbReference type="InterPro" id="IPR005798">
    <property type="entry name" value="Cyt_b/b6_C"/>
</dbReference>
<dbReference type="InterPro" id="IPR036150">
    <property type="entry name" value="Cyt_b/b6_C_sf"/>
</dbReference>
<dbReference type="InterPro" id="IPR005797">
    <property type="entry name" value="Cyt_b/b6_N"/>
</dbReference>
<dbReference type="InterPro" id="IPR027387">
    <property type="entry name" value="Cytb/b6-like_sf"/>
</dbReference>
<dbReference type="InterPro" id="IPR030689">
    <property type="entry name" value="Cytochrome_b"/>
</dbReference>
<dbReference type="InterPro" id="IPR048260">
    <property type="entry name" value="Cytochrome_b_C_euk/bac"/>
</dbReference>
<dbReference type="InterPro" id="IPR048259">
    <property type="entry name" value="Cytochrome_b_N_euk/bac"/>
</dbReference>
<dbReference type="InterPro" id="IPR016174">
    <property type="entry name" value="Di-haem_cyt_TM"/>
</dbReference>
<dbReference type="PANTHER" id="PTHR19271">
    <property type="entry name" value="CYTOCHROME B"/>
    <property type="match status" value="1"/>
</dbReference>
<dbReference type="PANTHER" id="PTHR19271:SF16">
    <property type="entry name" value="CYTOCHROME B"/>
    <property type="match status" value="1"/>
</dbReference>
<dbReference type="Pfam" id="PF00032">
    <property type="entry name" value="Cytochrom_B_C"/>
    <property type="match status" value="1"/>
</dbReference>
<dbReference type="Pfam" id="PF00033">
    <property type="entry name" value="Cytochrome_B"/>
    <property type="match status" value="1"/>
</dbReference>
<dbReference type="PIRSF" id="PIRSF038885">
    <property type="entry name" value="COB"/>
    <property type="match status" value="1"/>
</dbReference>
<dbReference type="SUPFAM" id="SSF81648">
    <property type="entry name" value="a domain/subunit of cytochrome bc1 complex (Ubiquinol-cytochrome c reductase)"/>
    <property type="match status" value="1"/>
</dbReference>
<dbReference type="SUPFAM" id="SSF81342">
    <property type="entry name" value="Transmembrane di-heme cytochromes"/>
    <property type="match status" value="1"/>
</dbReference>
<dbReference type="PROSITE" id="PS51003">
    <property type="entry name" value="CYTB_CTER"/>
    <property type="match status" value="1"/>
</dbReference>
<dbReference type="PROSITE" id="PS51002">
    <property type="entry name" value="CYTB_NTER"/>
    <property type="match status" value="1"/>
</dbReference>
<sequence length="379" mass="42574">MSTNLRKTHPLAKIINSSFIDLPSPSNISAWWNFGSLLGACLILQTITGIFLAMHYSPDISLAFSSVAHITRDVQYGWLIRNMHANGASLFFMCIYLHIGRGIYYGSYLYKETWNTGTTLLLLMMATAFVGYVLPWGQMSFWGATVITNLLSAVPYIGNTLVQWIWGGFSVDNATLTRFFTFHFLLPFTIMGLTMVHLLFLHETGSNNPTGLNSNTDKIPFHPYFSYKDLLGLILMLAFLLTLTLFSPNLLGDPDNFTPANPLSTPPHIKPEWYFLFAYXILRSIPNKLGGVLALMLSILVLFMMPILHTSKQRTAQFRPLTQILFWLLIANLLVLTWIGGQPVENPFITIGQMASILHFSILLILMPIAGAIENKMLT</sequence>
<geneLocation type="mitochondrion"/>
<evidence type="ECO:0000250" key="1"/>
<evidence type="ECO:0000250" key="2">
    <source>
        <dbReference type="UniProtKB" id="P00157"/>
    </source>
</evidence>
<evidence type="ECO:0000255" key="3">
    <source>
        <dbReference type="PROSITE-ProRule" id="PRU00967"/>
    </source>
</evidence>
<evidence type="ECO:0000255" key="4">
    <source>
        <dbReference type="PROSITE-ProRule" id="PRU00968"/>
    </source>
</evidence>
<keyword id="KW-0249">Electron transport</keyword>
<keyword id="KW-0349">Heme</keyword>
<keyword id="KW-0408">Iron</keyword>
<keyword id="KW-0472">Membrane</keyword>
<keyword id="KW-0479">Metal-binding</keyword>
<keyword id="KW-0496">Mitochondrion</keyword>
<keyword id="KW-0999">Mitochondrion inner membrane</keyword>
<keyword id="KW-0679">Respiratory chain</keyword>
<keyword id="KW-0812">Transmembrane</keyword>
<keyword id="KW-1133">Transmembrane helix</keyword>
<keyword id="KW-0813">Transport</keyword>
<keyword id="KW-0830">Ubiquinone</keyword>
<protein>
    <recommendedName>
        <fullName>Cytochrome b</fullName>
    </recommendedName>
    <alternativeName>
        <fullName>Complex III subunit 3</fullName>
    </alternativeName>
    <alternativeName>
        <fullName>Complex III subunit III</fullName>
    </alternativeName>
    <alternativeName>
        <fullName>Cytochrome b-c1 complex subunit 3</fullName>
    </alternativeName>
    <alternativeName>
        <fullName>Ubiquinol-cytochrome-c reductase complex cytochrome b subunit</fullName>
    </alternativeName>
</protein>
<organism>
    <name type="scientific">Emys orbicularis</name>
    <name type="common">European pond turtle</name>
    <dbReference type="NCBI Taxonomy" id="82168"/>
    <lineage>
        <taxon>Eukaryota</taxon>
        <taxon>Metazoa</taxon>
        <taxon>Chordata</taxon>
        <taxon>Craniata</taxon>
        <taxon>Vertebrata</taxon>
        <taxon>Euteleostomi</taxon>
        <taxon>Archelosauria</taxon>
        <taxon>Testudinata</taxon>
        <taxon>Testudines</taxon>
        <taxon>Cryptodira</taxon>
        <taxon>Durocryptodira</taxon>
        <taxon>Testudinoidea</taxon>
        <taxon>Emydidae</taxon>
        <taxon>Emys</taxon>
    </lineage>
</organism>
<proteinExistence type="inferred from homology"/>
<reference key="1">
    <citation type="journal article" date="2002" name="Mol. Phylogenet. Evol.">
        <title>Molecular phylogenetics of emydine turtles: taxonomic revision and the evolution of shell kinesis.</title>
        <authorList>
            <person name="Feldman C.R."/>
            <person name="Parham J.F."/>
        </authorList>
    </citation>
    <scope>NUCLEOTIDE SEQUENCE [GENOMIC DNA]</scope>
    <source>
        <strain>Isolate CAS 182905</strain>
    </source>
</reference>
<feature type="chain" id="PRO_0000060919" description="Cytochrome b">
    <location>
        <begin position="1"/>
        <end position="379"/>
    </location>
</feature>
<feature type="transmembrane region" description="Helical" evidence="2">
    <location>
        <begin position="34"/>
        <end position="54"/>
    </location>
</feature>
<feature type="transmembrane region" description="Helical" evidence="2">
    <location>
        <begin position="78"/>
        <end position="99"/>
    </location>
</feature>
<feature type="transmembrane region" description="Helical" evidence="2">
    <location>
        <begin position="114"/>
        <end position="134"/>
    </location>
</feature>
<feature type="transmembrane region" description="Helical" evidence="2">
    <location>
        <begin position="179"/>
        <end position="199"/>
    </location>
</feature>
<feature type="transmembrane region" description="Helical" evidence="2">
    <location>
        <begin position="227"/>
        <end position="247"/>
    </location>
</feature>
<feature type="transmembrane region" description="Helical" evidence="2">
    <location>
        <begin position="289"/>
        <end position="309"/>
    </location>
</feature>
<feature type="transmembrane region" description="Helical" evidence="2">
    <location>
        <begin position="321"/>
        <end position="341"/>
    </location>
</feature>
<feature type="transmembrane region" description="Helical" evidence="2">
    <location>
        <begin position="348"/>
        <end position="368"/>
    </location>
</feature>
<feature type="binding site" description="axial binding residue" evidence="2">
    <location>
        <position position="84"/>
    </location>
    <ligand>
        <name>heme b</name>
        <dbReference type="ChEBI" id="CHEBI:60344"/>
        <label>b562</label>
    </ligand>
    <ligandPart>
        <name>Fe</name>
        <dbReference type="ChEBI" id="CHEBI:18248"/>
    </ligandPart>
</feature>
<feature type="binding site" description="axial binding residue" evidence="2">
    <location>
        <position position="98"/>
    </location>
    <ligand>
        <name>heme b</name>
        <dbReference type="ChEBI" id="CHEBI:60344"/>
        <label>b566</label>
    </ligand>
    <ligandPart>
        <name>Fe</name>
        <dbReference type="ChEBI" id="CHEBI:18248"/>
    </ligandPart>
</feature>
<feature type="binding site" description="axial binding residue" evidence="2">
    <location>
        <position position="183"/>
    </location>
    <ligand>
        <name>heme b</name>
        <dbReference type="ChEBI" id="CHEBI:60344"/>
        <label>b562</label>
    </ligand>
    <ligandPart>
        <name>Fe</name>
        <dbReference type="ChEBI" id="CHEBI:18248"/>
    </ligandPart>
</feature>
<feature type="binding site" description="axial binding residue" evidence="2">
    <location>
        <position position="197"/>
    </location>
    <ligand>
        <name>heme b</name>
        <dbReference type="ChEBI" id="CHEBI:60344"/>
        <label>b566</label>
    </ligand>
    <ligandPart>
        <name>Fe</name>
        <dbReference type="ChEBI" id="CHEBI:18248"/>
    </ligandPart>
</feature>
<feature type="binding site" evidence="2">
    <location>
        <position position="202"/>
    </location>
    <ligand>
        <name>a ubiquinone</name>
        <dbReference type="ChEBI" id="CHEBI:16389"/>
    </ligand>
</feature>
<accession>Q8SJL2</accession>
<comment type="function">
    <text evidence="2">Component of the ubiquinol-cytochrome c reductase complex (complex III or cytochrome b-c1 complex) that is part of the mitochondrial respiratory chain. The b-c1 complex mediates electron transfer from ubiquinol to cytochrome c. Contributes to the generation of a proton gradient across the mitochondrial membrane that is then used for ATP synthesis.</text>
</comment>
<comment type="cofactor">
    <cofactor evidence="2">
        <name>heme b</name>
        <dbReference type="ChEBI" id="CHEBI:60344"/>
    </cofactor>
    <text evidence="2">Binds 2 heme b groups non-covalently.</text>
</comment>
<comment type="subunit">
    <text evidence="2">The cytochrome bc1 complex contains 3 respiratory subunits (MT-CYB, CYC1 and UQCRFS1), 2 core proteins (UQCRC1 and UQCRC2) and probably 6 low-molecular weight proteins.</text>
</comment>
<comment type="subcellular location">
    <subcellularLocation>
        <location evidence="2">Mitochondrion inner membrane</location>
        <topology evidence="2">Multi-pass membrane protein</topology>
    </subcellularLocation>
</comment>
<comment type="miscellaneous">
    <text evidence="1">Heme 1 (or BL or b562) is low-potential and absorbs at about 562 nm, and heme 2 (or BH or b566) is high-potential and absorbs at about 566 nm.</text>
</comment>
<comment type="similarity">
    <text evidence="3 4">Belongs to the cytochrome b family.</text>
</comment>
<comment type="caution">
    <text evidence="2">The full-length protein contains only eight transmembrane helices, not nine as predicted by bioinformatics tools.</text>
</comment>
<name>CYB_EMYOR</name>
<gene>
    <name type="primary">MT-CYB</name>
    <name type="synonym">COB</name>
    <name type="synonym">CYTB</name>
    <name type="synonym">MTCYB</name>
</gene>